<reference key="1">
    <citation type="submission" date="2007-07" db="EMBL/GenBank/DDBJ databases">
        <title>Complete genome sequence of Campylobacter jejuni subsp doylei 269.97 isolated from human blood.</title>
        <authorList>
            <person name="Fouts D.E."/>
            <person name="Mongodin E.F."/>
            <person name="Puiu D."/>
            <person name="Sebastian Y."/>
            <person name="Miller W.G."/>
            <person name="Mandrell R.E."/>
            <person name="Lastovica A.J."/>
            <person name="Nelson K.E."/>
        </authorList>
    </citation>
    <scope>NUCLEOTIDE SEQUENCE [LARGE SCALE GENOMIC DNA]</scope>
    <source>
        <strain>ATCC BAA-1458 / RM4099 / 269.97</strain>
    </source>
</reference>
<accession>A7H5U7</accession>
<organism>
    <name type="scientific">Campylobacter jejuni subsp. doylei (strain ATCC BAA-1458 / RM4099 / 269.97)</name>
    <dbReference type="NCBI Taxonomy" id="360109"/>
    <lineage>
        <taxon>Bacteria</taxon>
        <taxon>Pseudomonadati</taxon>
        <taxon>Campylobacterota</taxon>
        <taxon>Epsilonproteobacteria</taxon>
        <taxon>Campylobacterales</taxon>
        <taxon>Campylobacteraceae</taxon>
        <taxon>Campylobacter</taxon>
    </lineage>
</organism>
<name>HIS1_CAMJD</name>
<comment type="function">
    <text evidence="1">Catalyzes the condensation of ATP and 5-phosphoribose 1-diphosphate to form N'-(5'-phosphoribosyl)-ATP (PR-ATP). Has a crucial role in the pathway because the rate of histidine biosynthesis seems to be controlled primarily by regulation of HisG enzymatic activity.</text>
</comment>
<comment type="catalytic activity">
    <reaction evidence="1">
        <text>1-(5-phospho-beta-D-ribosyl)-ATP + diphosphate = 5-phospho-alpha-D-ribose 1-diphosphate + ATP</text>
        <dbReference type="Rhea" id="RHEA:18473"/>
        <dbReference type="ChEBI" id="CHEBI:30616"/>
        <dbReference type="ChEBI" id="CHEBI:33019"/>
        <dbReference type="ChEBI" id="CHEBI:58017"/>
        <dbReference type="ChEBI" id="CHEBI:73183"/>
        <dbReference type="EC" id="2.4.2.17"/>
    </reaction>
</comment>
<comment type="cofactor">
    <cofactor evidence="1">
        <name>Mg(2+)</name>
        <dbReference type="ChEBI" id="CHEBI:18420"/>
    </cofactor>
</comment>
<comment type="activity regulation">
    <text evidence="1">Feedback inhibited by histidine.</text>
</comment>
<comment type="pathway">
    <text evidence="1">Amino-acid biosynthesis; L-histidine biosynthesis; L-histidine from 5-phospho-alpha-D-ribose 1-diphosphate: step 1/9.</text>
</comment>
<comment type="subcellular location">
    <subcellularLocation>
        <location evidence="1">Cytoplasm</location>
    </subcellularLocation>
</comment>
<comment type="similarity">
    <text evidence="1">Belongs to the ATP phosphoribosyltransferase family. Long subfamily.</text>
</comment>
<feature type="chain" id="PRO_1000004450" description="ATP phosphoribosyltransferase">
    <location>
        <begin position="1"/>
        <end position="299"/>
    </location>
</feature>
<sequence>MQENTRLRIAIQKSGRLSKESMKLLSECGVKMHIHEQSLIAFSTNLPIDILRVRDDDIPGLIFDGVVDLGIIGENVLEENELKRQSLGENPNYKLLKKLDFGFCRLSLALPQENKFQNLKDFEGLRIATSYPQLLKRFMKENGINYKNCMLTGSIEVAPRANLADAICDLVSSGATLQANNLKEIKVIYESRACLIQKENALIKEKQALVDKIMLRVAGVMQARESKYIMLHAPKEKLDKIQALLPGVERPTILPLAHDEKNVALHMVSKENLFWETMEALKEEGASSILVLPIEKMLK</sequence>
<keyword id="KW-0028">Amino-acid biosynthesis</keyword>
<keyword id="KW-0067">ATP-binding</keyword>
<keyword id="KW-0963">Cytoplasm</keyword>
<keyword id="KW-0328">Glycosyltransferase</keyword>
<keyword id="KW-0368">Histidine biosynthesis</keyword>
<keyword id="KW-0460">Magnesium</keyword>
<keyword id="KW-0479">Metal-binding</keyword>
<keyword id="KW-0547">Nucleotide-binding</keyword>
<keyword id="KW-0808">Transferase</keyword>
<protein>
    <recommendedName>
        <fullName evidence="1">ATP phosphoribosyltransferase</fullName>
        <shortName evidence="1">ATP-PRT</shortName>
        <shortName evidence="1">ATP-PRTase</shortName>
        <ecNumber evidence="1">2.4.2.17</ecNumber>
    </recommendedName>
</protein>
<gene>
    <name evidence="1" type="primary">hisG</name>
    <name type="ordered locus">JJD26997_1950</name>
</gene>
<evidence type="ECO:0000255" key="1">
    <source>
        <dbReference type="HAMAP-Rule" id="MF_00079"/>
    </source>
</evidence>
<proteinExistence type="inferred from homology"/>
<dbReference type="EC" id="2.4.2.17" evidence="1"/>
<dbReference type="EMBL" id="CP000768">
    <property type="protein sequence ID" value="ABS43974.1"/>
    <property type="molecule type" value="Genomic_DNA"/>
</dbReference>
<dbReference type="SMR" id="A7H5U7"/>
<dbReference type="KEGG" id="cjd:JJD26997_1950"/>
<dbReference type="HOGENOM" id="CLU_038115_1_0_7"/>
<dbReference type="UniPathway" id="UPA00031">
    <property type="reaction ID" value="UER00006"/>
</dbReference>
<dbReference type="Proteomes" id="UP000002302">
    <property type="component" value="Chromosome"/>
</dbReference>
<dbReference type="GO" id="GO:0005737">
    <property type="term" value="C:cytoplasm"/>
    <property type="evidence" value="ECO:0007669"/>
    <property type="project" value="UniProtKB-SubCell"/>
</dbReference>
<dbReference type="GO" id="GO:0005524">
    <property type="term" value="F:ATP binding"/>
    <property type="evidence" value="ECO:0007669"/>
    <property type="project" value="UniProtKB-KW"/>
</dbReference>
<dbReference type="GO" id="GO:0003879">
    <property type="term" value="F:ATP phosphoribosyltransferase activity"/>
    <property type="evidence" value="ECO:0007669"/>
    <property type="project" value="UniProtKB-UniRule"/>
</dbReference>
<dbReference type="GO" id="GO:0000287">
    <property type="term" value="F:magnesium ion binding"/>
    <property type="evidence" value="ECO:0007669"/>
    <property type="project" value="UniProtKB-UniRule"/>
</dbReference>
<dbReference type="GO" id="GO:0000105">
    <property type="term" value="P:L-histidine biosynthetic process"/>
    <property type="evidence" value="ECO:0007669"/>
    <property type="project" value="UniProtKB-UniRule"/>
</dbReference>
<dbReference type="CDD" id="cd13592">
    <property type="entry name" value="PBP2_HisGL2"/>
    <property type="match status" value="1"/>
</dbReference>
<dbReference type="FunFam" id="3.30.70.120:FF:000002">
    <property type="entry name" value="ATP phosphoribosyltransferase"/>
    <property type="match status" value="1"/>
</dbReference>
<dbReference type="FunFam" id="3.40.190.10:FF:000008">
    <property type="entry name" value="ATP phosphoribosyltransferase"/>
    <property type="match status" value="1"/>
</dbReference>
<dbReference type="Gene3D" id="3.30.70.120">
    <property type="match status" value="1"/>
</dbReference>
<dbReference type="Gene3D" id="3.40.190.10">
    <property type="entry name" value="Periplasmic binding protein-like II"/>
    <property type="match status" value="2"/>
</dbReference>
<dbReference type="HAMAP" id="MF_00079">
    <property type="entry name" value="HisG_Long"/>
    <property type="match status" value="1"/>
</dbReference>
<dbReference type="InterPro" id="IPR020621">
    <property type="entry name" value="ATP-PRT_HisG_long"/>
</dbReference>
<dbReference type="InterPro" id="IPR013820">
    <property type="entry name" value="ATP_PRibTrfase_cat"/>
</dbReference>
<dbReference type="InterPro" id="IPR018198">
    <property type="entry name" value="ATP_PRibTrfase_CS"/>
</dbReference>
<dbReference type="InterPro" id="IPR001348">
    <property type="entry name" value="ATP_PRibTrfase_HisG"/>
</dbReference>
<dbReference type="InterPro" id="IPR013115">
    <property type="entry name" value="HisG_C"/>
</dbReference>
<dbReference type="InterPro" id="IPR011322">
    <property type="entry name" value="N-reg_PII-like_a/b"/>
</dbReference>
<dbReference type="InterPro" id="IPR015867">
    <property type="entry name" value="N-reg_PII/ATP_PRibTrfase_C"/>
</dbReference>
<dbReference type="NCBIfam" id="TIGR00070">
    <property type="entry name" value="hisG"/>
    <property type="match status" value="1"/>
</dbReference>
<dbReference type="NCBIfam" id="TIGR03455">
    <property type="entry name" value="HisG_C-term"/>
    <property type="match status" value="1"/>
</dbReference>
<dbReference type="PANTHER" id="PTHR21403:SF8">
    <property type="entry name" value="ATP PHOSPHORIBOSYLTRANSFERASE"/>
    <property type="match status" value="1"/>
</dbReference>
<dbReference type="PANTHER" id="PTHR21403">
    <property type="entry name" value="ATP PHOSPHORIBOSYLTRANSFERASE ATP-PRTASE"/>
    <property type="match status" value="1"/>
</dbReference>
<dbReference type="Pfam" id="PF01634">
    <property type="entry name" value="HisG"/>
    <property type="match status" value="1"/>
</dbReference>
<dbReference type="Pfam" id="PF08029">
    <property type="entry name" value="HisG_C"/>
    <property type="match status" value="1"/>
</dbReference>
<dbReference type="SUPFAM" id="SSF54913">
    <property type="entry name" value="GlnB-like"/>
    <property type="match status" value="1"/>
</dbReference>
<dbReference type="SUPFAM" id="SSF53850">
    <property type="entry name" value="Periplasmic binding protein-like II"/>
    <property type="match status" value="1"/>
</dbReference>
<dbReference type="PROSITE" id="PS01316">
    <property type="entry name" value="ATP_P_PHORIBOSYLTR"/>
    <property type="match status" value="1"/>
</dbReference>